<comment type="function">
    <text evidence="1">Part of an energy-coupled inorganic carbon pump.</text>
</comment>
<comment type="cofactor">
    <cofactor evidence="1">
        <name>Zn(2+)</name>
        <dbReference type="ChEBI" id="CHEBI:29105"/>
    </cofactor>
</comment>
<comment type="subunit">
    <text evidence="1">Forms a complex with DabB.</text>
</comment>
<comment type="subcellular location">
    <subcellularLocation>
        <location evidence="1">Cell membrane</location>
        <topology evidence="1">Peripheral membrane protein</topology>
    </subcellularLocation>
</comment>
<comment type="similarity">
    <text evidence="1">Belongs to the inorganic carbon transporter (TC 9.A.2) DabA family.</text>
</comment>
<gene>
    <name evidence="1" type="primary">dabA</name>
    <name type="ordered locus">GTNG_0448</name>
</gene>
<dbReference type="EMBL" id="CP000557">
    <property type="protein sequence ID" value="ABO65830.1"/>
    <property type="molecule type" value="Genomic_DNA"/>
</dbReference>
<dbReference type="SMR" id="A4IKH6"/>
<dbReference type="KEGG" id="gtn:GTNG_0448"/>
<dbReference type="eggNOG" id="COG3002">
    <property type="taxonomic scope" value="Bacteria"/>
</dbReference>
<dbReference type="HOGENOM" id="CLU_009885_0_0_9"/>
<dbReference type="Proteomes" id="UP000001578">
    <property type="component" value="Chromosome"/>
</dbReference>
<dbReference type="GO" id="GO:0005886">
    <property type="term" value="C:plasma membrane"/>
    <property type="evidence" value="ECO:0007669"/>
    <property type="project" value="UniProtKB-SubCell"/>
</dbReference>
<dbReference type="GO" id="GO:0008270">
    <property type="term" value="F:zinc ion binding"/>
    <property type="evidence" value="ECO:0007669"/>
    <property type="project" value="UniProtKB-UniRule"/>
</dbReference>
<dbReference type="HAMAP" id="MF_01871">
    <property type="entry name" value="DabA"/>
    <property type="match status" value="1"/>
</dbReference>
<dbReference type="InterPro" id="IPR018752">
    <property type="entry name" value="DabA"/>
</dbReference>
<dbReference type="PANTHER" id="PTHR38344:SF1">
    <property type="entry name" value="INORGANIC CARBON TRANSPORTER SUBUNIT DABA-RELATED"/>
    <property type="match status" value="1"/>
</dbReference>
<dbReference type="PANTHER" id="PTHR38344">
    <property type="entry name" value="UPF0753 PROTEIN AQ_863"/>
    <property type="match status" value="1"/>
</dbReference>
<dbReference type="Pfam" id="PF10070">
    <property type="entry name" value="DabA"/>
    <property type="match status" value="1"/>
</dbReference>
<protein>
    <recommendedName>
        <fullName evidence="1">Probable inorganic carbon transporter subunit DabA</fullName>
    </recommendedName>
</protein>
<reference key="1">
    <citation type="journal article" date="2007" name="Proc. Natl. Acad. Sci. U.S.A.">
        <title>Genome and proteome of long-chain alkane degrading Geobacillus thermodenitrificans NG80-2 isolated from a deep-subsurface oil reservoir.</title>
        <authorList>
            <person name="Feng L."/>
            <person name="Wang W."/>
            <person name="Cheng J."/>
            <person name="Ren Y."/>
            <person name="Zhao G."/>
            <person name="Gao C."/>
            <person name="Tang Y."/>
            <person name="Liu X."/>
            <person name="Han W."/>
            <person name="Peng X."/>
            <person name="Liu R."/>
            <person name="Wang L."/>
        </authorList>
    </citation>
    <scope>NUCLEOTIDE SEQUENCE [LARGE SCALE GENOMIC DNA]</scope>
    <source>
        <strain>NG80-2</strain>
    </source>
</reference>
<proteinExistence type="inferred from homology"/>
<evidence type="ECO:0000255" key="1">
    <source>
        <dbReference type="HAMAP-Rule" id="MF_01871"/>
    </source>
</evidence>
<name>DABA_GEOTN</name>
<accession>A4IKH6</accession>
<organism>
    <name type="scientific">Geobacillus thermodenitrificans (strain NG80-2)</name>
    <dbReference type="NCBI Taxonomy" id="420246"/>
    <lineage>
        <taxon>Bacteria</taxon>
        <taxon>Bacillati</taxon>
        <taxon>Bacillota</taxon>
        <taxon>Bacilli</taxon>
        <taxon>Bacillales</taxon>
        <taxon>Anoxybacillaceae</taxon>
        <taxon>Geobacillus</taxon>
    </lineage>
</organism>
<sequence length="875" mass="99023">MSLERTVVMLNEDDTQGRPLADLVKEAAKSIAPLWPISSFIARHPWMGLEGELFADAADRWQQVYGIDLYPPMTVFYTALKKGEIDPVFVERRLQSWLDKQSLPVPRHEAERLCRSFLWNDTVPEEAFSLPEMAQLAEGTQLRPMAVQPISKRLDQIAKRLDQQMIKWCKLFYDESGGTWTLPQREQGFYQAWRQLVVTDPSLSKDERKRFSGWPHDKHEALNYALEKLGIRDEDVVAYLEAHLLALPGWAGMAVWRSHRAGDEVGGLIDYLAVRLSIEWVLTAPHLPLHGEENGERRDVLPLLAAWFYWTGMTPEDWRRLRTNEQQARLAFADRFWRIDRHHLWLEAWEDTDEAKLKEAVSTRHRMSEPEQVAAQLLFCIDVRSEPFRRHLEAAGPFETYGCAGFFGLPIQTRVLDSEDVHPSCPAIVDPRHEIREVAPPEEVEPYRFRRDMFRFVSKTFKKMKQHVLAGLLLPEMSGPWLGLHTLARSAAPAWAGQVIRYTKKSVEQKPKTTLSLHYHEGDETTGLPIGLTNEEQVEYVKQLLVTIGLTSSFAPLVVVCGHGSETTNNPYASALDCGACGGVAGAFNARVFAALANLPSVRAELAKEGIVIPDETVFVAAEHITTVDELRWLEVPPLSEAAQQSFDRLKQALHDVSRQANAERMMKLPHVGGKPRDPVAEAQRRAVDWSEIRPEWGLAGNTAFFIGRRALTKGVHLDGRVFLHSYDWRDDPTGEALARIIAGPATVGQWINLQYYASTVAPHYYGSGDKTTQTVTGGIGVMQGNGSDLLAGLPWQSVVSSDRELFHFPLRLLVIIEAPSYYIERLLNENSEFRRKVENGWLRLSSIDPNSGAWMKWGDTHSLSVWSREMGIGK</sequence>
<feature type="chain" id="PRO_0000387265" description="Probable inorganic carbon transporter subunit DabA">
    <location>
        <begin position="1"/>
        <end position="875"/>
    </location>
</feature>
<feature type="binding site" evidence="1">
    <location>
        <position position="380"/>
    </location>
    <ligand>
        <name>Zn(2+)</name>
        <dbReference type="ChEBI" id="CHEBI:29105"/>
    </ligand>
</feature>
<feature type="binding site" evidence="1">
    <location>
        <position position="382"/>
    </location>
    <ligand>
        <name>Zn(2+)</name>
        <dbReference type="ChEBI" id="CHEBI:29105"/>
    </ligand>
</feature>
<feature type="binding site" evidence="1">
    <location>
        <position position="563"/>
    </location>
    <ligand>
        <name>Zn(2+)</name>
        <dbReference type="ChEBI" id="CHEBI:29105"/>
    </ligand>
</feature>
<feature type="binding site" evidence="1">
    <location>
        <position position="578"/>
    </location>
    <ligand>
        <name>Zn(2+)</name>
        <dbReference type="ChEBI" id="CHEBI:29105"/>
    </ligand>
</feature>
<keyword id="KW-1003">Cell membrane</keyword>
<keyword id="KW-0472">Membrane</keyword>
<keyword id="KW-0479">Metal-binding</keyword>
<keyword id="KW-0813">Transport</keyword>
<keyword id="KW-0862">Zinc</keyword>